<feature type="chain" id="PRO_0000084752" description="Proteasome-activating nucleotidase">
    <location>
        <begin position="1"/>
        <end position="393"/>
    </location>
</feature>
<feature type="region of interest" description="Docks into pockets in the proteasome alpha-ring to cause gate opening" evidence="1">
    <location>
        <begin position="391"/>
        <end position="393"/>
    </location>
</feature>
<feature type="coiled-coil region" evidence="1">
    <location>
        <begin position="15"/>
        <end position="53"/>
    </location>
</feature>
<feature type="coiled-coil region" evidence="1">
    <location>
        <begin position="365"/>
        <end position="393"/>
    </location>
</feature>
<feature type="binding site" evidence="1">
    <location>
        <begin position="178"/>
        <end position="183"/>
    </location>
    <ligand>
        <name>ATP</name>
        <dbReference type="ChEBI" id="CHEBI:30616"/>
    </ligand>
</feature>
<feature type="binding site" evidence="1">
    <location>
        <position position="317"/>
    </location>
    <ligand>
        <name>ATP</name>
        <dbReference type="ChEBI" id="CHEBI:30616"/>
    </ligand>
</feature>
<dbReference type="EMBL" id="AE006641">
    <property type="protein sequence ID" value="AAK40609.1"/>
    <property type="molecule type" value="Genomic_DNA"/>
</dbReference>
<dbReference type="PIR" id="B90169">
    <property type="entry name" value="B90169"/>
</dbReference>
<dbReference type="RefSeq" id="WP_009990546.1">
    <property type="nucleotide sequence ID" value="NC_002754.1"/>
</dbReference>
<dbReference type="SMR" id="Q980M1"/>
<dbReference type="FunCoup" id="Q980M1">
    <property type="interactions" value="266"/>
</dbReference>
<dbReference type="STRING" id="273057.SSO0271"/>
<dbReference type="PaxDb" id="273057-SSO0271"/>
<dbReference type="EnsemblBacteria" id="AAK40609">
    <property type="protein sequence ID" value="AAK40609"/>
    <property type="gene ID" value="SSO0271"/>
</dbReference>
<dbReference type="KEGG" id="sso:SSO0271"/>
<dbReference type="PATRIC" id="fig|273057.12.peg.265"/>
<dbReference type="eggNOG" id="arCOG01306">
    <property type="taxonomic scope" value="Archaea"/>
</dbReference>
<dbReference type="HOGENOM" id="CLU_000688_2_0_2"/>
<dbReference type="InParanoid" id="Q980M1"/>
<dbReference type="PhylomeDB" id="Q980M1"/>
<dbReference type="Proteomes" id="UP000001974">
    <property type="component" value="Chromosome"/>
</dbReference>
<dbReference type="GO" id="GO:0005737">
    <property type="term" value="C:cytoplasm"/>
    <property type="evidence" value="ECO:0007669"/>
    <property type="project" value="UniProtKB-SubCell"/>
</dbReference>
<dbReference type="GO" id="GO:0008540">
    <property type="term" value="C:proteasome regulatory particle, base subcomplex"/>
    <property type="evidence" value="ECO:0000318"/>
    <property type="project" value="GO_Central"/>
</dbReference>
<dbReference type="GO" id="GO:0022623">
    <property type="term" value="C:proteasome-activating nucleotidase complex"/>
    <property type="evidence" value="ECO:0007669"/>
    <property type="project" value="UniProtKB-UniRule"/>
</dbReference>
<dbReference type="GO" id="GO:0005524">
    <property type="term" value="F:ATP binding"/>
    <property type="evidence" value="ECO:0007669"/>
    <property type="project" value="UniProtKB-UniRule"/>
</dbReference>
<dbReference type="GO" id="GO:0016887">
    <property type="term" value="F:ATP hydrolysis activity"/>
    <property type="evidence" value="ECO:0007669"/>
    <property type="project" value="UniProtKB-UniRule"/>
</dbReference>
<dbReference type="GO" id="GO:0036402">
    <property type="term" value="F:proteasome-activating activity"/>
    <property type="evidence" value="ECO:0000318"/>
    <property type="project" value="GO_Central"/>
</dbReference>
<dbReference type="GO" id="GO:0043161">
    <property type="term" value="P:proteasome-mediated ubiquitin-dependent protein catabolic process"/>
    <property type="evidence" value="ECO:0000318"/>
    <property type="project" value="GO_Central"/>
</dbReference>
<dbReference type="GO" id="GO:0043335">
    <property type="term" value="P:protein unfolding"/>
    <property type="evidence" value="ECO:0007669"/>
    <property type="project" value="UniProtKB-UniRule"/>
</dbReference>
<dbReference type="CDD" id="cd19502">
    <property type="entry name" value="RecA-like_PAN_like"/>
    <property type="match status" value="1"/>
</dbReference>
<dbReference type="FunFam" id="3.40.50.300:FF:000033">
    <property type="entry name" value="26S protease regulatory subunit 6B"/>
    <property type="match status" value="1"/>
</dbReference>
<dbReference type="FunFam" id="1.10.8.60:FF:000001">
    <property type="entry name" value="ATP-dependent zinc metalloprotease FtsH"/>
    <property type="match status" value="1"/>
</dbReference>
<dbReference type="Gene3D" id="1.10.8.60">
    <property type="match status" value="1"/>
</dbReference>
<dbReference type="Gene3D" id="2.40.50.140">
    <property type="entry name" value="Nucleic acid-binding proteins"/>
    <property type="match status" value="1"/>
</dbReference>
<dbReference type="Gene3D" id="3.40.50.300">
    <property type="entry name" value="P-loop containing nucleotide triphosphate hydrolases"/>
    <property type="match status" value="1"/>
</dbReference>
<dbReference type="HAMAP" id="MF_00553">
    <property type="entry name" value="PAN"/>
    <property type="match status" value="1"/>
</dbReference>
<dbReference type="InterPro" id="IPR050221">
    <property type="entry name" value="26S_Proteasome_ATPase"/>
</dbReference>
<dbReference type="InterPro" id="IPR003593">
    <property type="entry name" value="AAA+_ATPase"/>
</dbReference>
<dbReference type="InterPro" id="IPR041569">
    <property type="entry name" value="AAA_lid_3"/>
</dbReference>
<dbReference type="InterPro" id="IPR003959">
    <property type="entry name" value="ATPase_AAA_core"/>
</dbReference>
<dbReference type="InterPro" id="IPR003960">
    <property type="entry name" value="ATPase_AAA_CS"/>
</dbReference>
<dbReference type="InterPro" id="IPR012340">
    <property type="entry name" value="NA-bd_OB-fold"/>
</dbReference>
<dbReference type="InterPro" id="IPR023501">
    <property type="entry name" value="Nucleotidase_PAN"/>
</dbReference>
<dbReference type="InterPro" id="IPR027417">
    <property type="entry name" value="P-loop_NTPase"/>
</dbReference>
<dbReference type="InterPro" id="IPR032501">
    <property type="entry name" value="Prot_ATP_ID_OB_2nd"/>
</dbReference>
<dbReference type="NCBIfam" id="NF003069">
    <property type="entry name" value="PRK03992.1"/>
    <property type="match status" value="1"/>
</dbReference>
<dbReference type="NCBIfam" id="TIGR01242">
    <property type="entry name" value="proteasome-activating nucleotidase"/>
    <property type="match status" value="1"/>
</dbReference>
<dbReference type="PANTHER" id="PTHR23073">
    <property type="entry name" value="26S PROTEASOME REGULATORY SUBUNIT"/>
    <property type="match status" value="1"/>
</dbReference>
<dbReference type="Pfam" id="PF00004">
    <property type="entry name" value="AAA"/>
    <property type="match status" value="1"/>
</dbReference>
<dbReference type="Pfam" id="PF17862">
    <property type="entry name" value="AAA_lid_3"/>
    <property type="match status" value="1"/>
</dbReference>
<dbReference type="Pfam" id="PF16450">
    <property type="entry name" value="Prot_ATP_ID_OB_C"/>
    <property type="match status" value="1"/>
</dbReference>
<dbReference type="SMART" id="SM00382">
    <property type="entry name" value="AAA"/>
    <property type="match status" value="1"/>
</dbReference>
<dbReference type="SUPFAM" id="SSF52540">
    <property type="entry name" value="P-loop containing nucleoside triphosphate hydrolases"/>
    <property type="match status" value="1"/>
</dbReference>
<dbReference type="PROSITE" id="PS00674">
    <property type="entry name" value="AAA"/>
    <property type="match status" value="1"/>
</dbReference>
<organism>
    <name type="scientific">Saccharolobus solfataricus (strain ATCC 35092 / DSM 1617 / JCM 11322 / P2)</name>
    <name type="common">Sulfolobus solfataricus</name>
    <dbReference type="NCBI Taxonomy" id="273057"/>
    <lineage>
        <taxon>Archaea</taxon>
        <taxon>Thermoproteota</taxon>
        <taxon>Thermoprotei</taxon>
        <taxon>Sulfolobales</taxon>
        <taxon>Sulfolobaceae</taxon>
        <taxon>Saccharolobus</taxon>
    </lineage>
</organism>
<sequence>MSGDFDTIRDASSPDEVQLVRLLEEKIKSLQIEIENLRKELNYYKAEMEKMLSPPLIEAVVLDVLPDGRVLVRSSSGPNLVVNIASHIDQKLIKPGISVALNQRGSTILEVLPQKEDPIVKTMEIIERPNVTYSEIGGLEEQIRELREVVELPLKNPEIFREIGVEPPKGVLLYGPPGTGKTMLAKAVATESNAVFIHVVASEFAQKFVGEGARIVRELFEMAKRKAPSIIFIDEIDAIGAKRIDIGTSGEREIQRTLMQLLAELDGFDPLDNVKIIAATNRIDILDPALLRPGRFDRIIEVPLPDFKGRTEIFNIYLKKMKIEDNINLELLSQLTEGFSGADIKNVCVEAAYMAIRDGRNKVTMNDLVEAINKINVKRNKMESMKERREKYS</sequence>
<reference key="1">
    <citation type="journal article" date="2001" name="Proc. Natl. Acad. Sci. U.S.A.">
        <title>The complete genome of the crenarchaeon Sulfolobus solfataricus P2.</title>
        <authorList>
            <person name="She Q."/>
            <person name="Singh R.K."/>
            <person name="Confalonieri F."/>
            <person name="Zivanovic Y."/>
            <person name="Allard G."/>
            <person name="Awayez M.J."/>
            <person name="Chan-Weiher C.C.-Y."/>
            <person name="Clausen I.G."/>
            <person name="Curtis B.A."/>
            <person name="De Moors A."/>
            <person name="Erauso G."/>
            <person name="Fletcher C."/>
            <person name="Gordon P.M.K."/>
            <person name="Heikamp-de Jong I."/>
            <person name="Jeffries A.C."/>
            <person name="Kozera C.J."/>
            <person name="Medina N."/>
            <person name="Peng X."/>
            <person name="Thi-Ngoc H.P."/>
            <person name="Redder P."/>
            <person name="Schenk M.E."/>
            <person name="Theriault C."/>
            <person name="Tolstrup N."/>
            <person name="Charlebois R.L."/>
            <person name="Doolittle W.F."/>
            <person name="Duguet M."/>
            <person name="Gaasterland T."/>
            <person name="Garrett R.A."/>
            <person name="Ragan M.A."/>
            <person name="Sensen C.W."/>
            <person name="Van der Oost J."/>
        </authorList>
    </citation>
    <scope>NUCLEOTIDE SEQUENCE [LARGE SCALE GENOMIC DNA]</scope>
    <source>
        <strain>ATCC 35092 / DSM 1617 / JCM 11322 / P2</strain>
    </source>
</reference>
<name>PAN_SACS2</name>
<accession>Q980M1</accession>
<evidence type="ECO:0000255" key="1">
    <source>
        <dbReference type="HAMAP-Rule" id="MF_00553"/>
    </source>
</evidence>
<keyword id="KW-0067">ATP-binding</keyword>
<keyword id="KW-0143">Chaperone</keyword>
<keyword id="KW-0175">Coiled coil</keyword>
<keyword id="KW-0963">Cytoplasm</keyword>
<keyword id="KW-0547">Nucleotide-binding</keyword>
<keyword id="KW-0647">Proteasome</keyword>
<keyword id="KW-1185">Reference proteome</keyword>
<comment type="function">
    <text evidence="1">ATPase which is responsible for recognizing, binding, unfolding and translocation of substrate proteins into the archaeal 20S proteasome core particle. Is essential for opening the gate of the 20S proteasome via an interaction with its C-terminus, thereby allowing substrate entry and access to the site of proteolysis. Thus, the C-termini of the proteasomal ATPase function like a 'key in a lock' to induce gate opening and therefore regulate proteolysis. Unfolding activity requires energy from ATP hydrolysis, whereas ATP binding alone promotes ATPase-20S proteasome association which triggers gate opening, and supports translocation of unfolded substrates.</text>
</comment>
<comment type="subunit">
    <text evidence="1">Homohexamer. The hexameric complex has a two-ring architecture resembling a top hat that caps the 20S proteasome core at one or both ends. Upon ATP-binding, the C-terminus of PAN interacts with the alpha-rings of the proteasome core by binding to the intersubunit pockets.</text>
</comment>
<comment type="subcellular location">
    <subcellularLocation>
        <location evidence="1">Cytoplasm</location>
    </subcellularLocation>
</comment>
<comment type="domain">
    <text evidence="1">Consists of three main regions, an N-terminal coiled-coil domain that may assist in substrate recognition, an interdomain involved in PAN hexamerization, and a C-terminal ATPase domain of the AAA type.</text>
</comment>
<comment type="similarity">
    <text evidence="1">Belongs to the AAA ATPase family.</text>
</comment>
<gene>
    <name evidence="1" type="primary">pan</name>
    <name type="ordered locus">SSO0271</name>
</gene>
<protein>
    <recommendedName>
        <fullName evidence="1">Proteasome-activating nucleotidase</fullName>
        <shortName evidence="1">PAN</shortName>
    </recommendedName>
    <alternativeName>
        <fullName evidence="1">Proteasomal ATPase</fullName>
    </alternativeName>
    <alternativeName>
        <fullName evidence="1">Proteasome regulatory ATPase</fullName>
    </alternativeName>
    <alternativeName>
        <fullName evidence="1">Proteasome regulatory particle</fullName>
    </alternativeName>
</protein>
<proteinExistence type="inferred from homology"/>